<dbReference type="EMBL" id="AF469621">
    <property type="protein sequence ID" value="AAL78677.1"/>
    <property type="molecule type" value="mRNA"/>
</dbReference>
<dbReference type="EMBL" id="AF469622">
    <property type="protein sequence ID" value="AAL78678.1"/>
    <property type="status" value="ALT_INIT"/>
    <property type="molecule type" value="mRNA"/>
</dbReference>
<dbReference type="EMBL" id="AC121886">
    <property type="status" value="NOT_ANNOTATED_CDS"/>
    <property type="molecule type" value="Genomic_DNA"/>
</dbReference>
<dbReference type="EMBL" id="AC129315">
    <property type="status" value="NOT_ANNOTATED_CDS"/>
    <property type="molecule type" value="Genomic_DNA"/>
</dbReference>
<dbReference type="EMBL" id="BC068145">
    <property type="protein sequence ID" value="AAH68145.1"/>
    <property type="molecule type" value="mRNA"/>
</dbReference>
<dbReference type="EMBL" id="AK220486">
    <property type="protein sequence ID" value="BAD90507.1"/>
    <property type="status" value="ALT_INIT"/>
    <property type="molecule type" value="mRNA"/>
</dbReference>
<dbReference type="CCDS" id="CCDS29196.1">
    <molecule id="Q8R5G7-1"/>
</dbReference>
<dbReference type="CCDS" id="CCDS89225.1">
    <molecule id="Q8R5G7-2"/>
</dbReference>
<dbReference type="RefSeq" id="NP_001192265.1">
    <molecule id="Q8R5G7-2"/>
    <property type="nucleotide sequence ID" value="NM_001205336.2"/>
</dbReference>
<dbReference type="RefSeq" id="NP_631945.2">
    <molecule id="Q8R5G7-1"/>
    <property type="nucleotide sequence ID" value="NM_139206.3"/>
</dbReference>
<dbReference type="RefSeq" id="XP_006525552.1">
    <molecule id="Q8R5G7-1"/>
    <property type="nucleotide sequence ID" value="XM_006525489.3"/>
</dbReference>
<dbReference type="SMR" id="Q8R5G7"/>
<dbReference type="BioGRID" id="223164">
    <property type="interactions" value="7"/>
</dbReference>
<dbReference type="FunCoup" id="Q8R5G7">
    <property type="interactions" value="1158"/>
</dbReference>
<dbReference type="IntAct" id="Q8R5G7">
    <property type="interactions" value="5"/>
</dbReference>
<dbReference type="STRING" id="10090.ENSMUSP00000035662"/>
<dbReference type="GlyGen" id="Q8R5G7">
    <property type="glycosylation" value="3 sites"/>
</dbReference>
<dbReference type="iPTMnet" id="Q8R5G7"/>
<dbReference type="PhosphoSitePlus" id="Q8R5G7"/>
<dbReference type="jPOST" id="Q8R5G7"/>
<dbReference type="PaxDb" id="10090-ENSMUSP00000035662"/>
<dbReference type="ProteomicsDB" id="296280">
    <molecule id="Q8R5G7-1"/>
</dbReference>
<dbReference type="ProteomicsDB" id="296281">
    <molecule id="Q8R5G7-2"/>
</dbReference>
<dbReference type="ProteomicsDB" id="296282">
    <molecule id="Q8R5G7-3"/>
</dbReference>
<dbReference type="Antibodypedia" id="27363">
    <property type="antibodies" value="117 antibodies from 29 providers"/>
</dbReference>
<dbReference type="DNASU" id="106952"/>
<dbReference type="Ensembl" id="ENSMUST00000042944.9">
    <molecule id="Q8R5G7-1"/>
    <property type="protein sequence ID" value="ENSMUSP00000035662.8"/>
    <property type="gene ID" value="ENSMUSG00000024451.10"/>
</dbReference>
<dbReference type="Ensembl" id="ENSMUST00000237272.2">
    <molecule id="Q8R5G7-2"/>
    <property type="protein sequence ID" value="ENSMUSP00000157868.2"/>
    <property type="gene ID" value="ENSMUSG00000024451.10"/>
</dbReference>
<dbReference type="GeneID" id="106952"/>
<dbReference type="KEGG" id="mmu:106952"/>
<dbReference type="UCSC" id="uc008erq.2">
    <molecule id="Q8R5G7-1"/>
    <property type="organism name" value="mouse"/>
</dbReference>
<dbReference type="AGR" id="MGI:2147274"/>
<dbReference type="CTD" id="64411"/>
<dbReference type="MGI" id="MGI:2147274">
    <property type="gene designation" value="Arap3"/>
</dbReference>
<dbReference type="VEuPathDB" id="HostDB:ENSMUSG00000024451"/>
<dbReference type="eggNOG" id="KOG1117">
    <property type="taxonomic scope" value="Eukaryota"/>
</dbReference>
<dbReference type="GeneTree" id="ENSGT00940000158869"/>
<dbReference type="HOGENOM" id="CLU_002900_1_0_1"/>
<dbReference type="InParanoid" id="Q8R5G7"/>
<dbReference type="OMA" id="TLNTMEM"/>
<dbReference type="OrthoDB" id="29546at2759"/>
<dbReference type="PhylomeDB" id="Q8R5G7"/>
<dbReference type="TreeFam" id="TF105769"/>
<dbReference type="Reactome" id="R-MMU-8980692">
    <property type="pathway name" value="RHOA GTPase cycle"/>
</dbReference>
<dbReference type="Reactome" id="R-MMU-9013148">
    <property type="pathway name" value="CDC42 GTPase cycle"/>
</dbReference>
<dbReference type="Reactome" id="R-MMU-9013149">
    <property type="pathway name" value="RAC1 GTPase cycle"/>
</dbReference>
<dbReference type="Reactome" id="R-MMU-9013423">
    <property type="pathway name" value="RAC3 GTPase cycle"/>
</dbReference>
<dbReference type="BioGRID-ORCS" id="106952">
    <property type="hits" value="1 hit in 77 CRISPR screens"/>
</dbReference>
<dbReference type="ChiTaRS" id="Arap3">
    <property type="organism name" value="mouse"/>
</dbReference>
<dbReference type="PRO" id="PR:Q8R5G7"/>
<dbReference type="Proteomes" id="UP000000589">
    <property type="component" value="Chromosome 18"/>
</dbReference>
<dbReference type="RNAct" id="Q8R5G7">
    <property type="molecule type" value="protein"/>
</dbReference>
<dbReference type="Bgee" id="ENSMUSG00000024451">
    <property type="expression patterns" value="Expressed in granulocyte and 133 other cell types or tissues"/>
</dbReference>
<dbReference type="ExpressionAtlas" id="Q8R5G7">
    <property type="expression patterns" value="baseline and differential"/>
</dbReference>
<dbReference type="GO" id="GO:0005737">
    <property type="term" value="C:cytoplasm"/>
    <property type="evidence" value="ECO:0000314"/>
    <property type="project" value="MGI"/>
</dbReference>
<dbReference type="GO" id="GO:0005856">
    <property type="term" value="C:cytoskeleton"/>
    <property type="evidence" value="ECO:0007669"/>
    <property type="project" value="UniProtKB-SubCell"/>
</dbReference>
<dbReference type="GO" id="GO:0030027">
    <property type="term" value="C:lamellipodium"/>
    <property type="evidence" value="ECO:0000314"/>
    <property type="project" value="MGI"/>
</dbReference>
<dbReference type="GO" id="GO:0005886">
    <property type="term" value="C:plasma membrane"/>
    <property type="evidence" value="ECO:0007669"/>
    <property type="project" value="UniProtKB-SubCell"/>
</dbReference>
<dbReference type="GO" id="GO:0001726">
    <property type="term" value="C:ruffle"/>
    <property type="evidence" value="ECO:0000314"/>
    <property type="project" value="MGI"/>
</dbReference>
<dbReference type="GO" id="GO:0005096">
    <property type="term" value="F:GTPase activator activity"/>
    <property type="evidence" value="ECO:0000314"/>
    <property type="project" value="MGI"/>
</dbReference>
<dbReference type="GO" id="GO:0005547">
    <property type="term" value="F:phosphatidylinositol-3,4,5-trisphosphate binding"/>
    <property type="evidence" value="ECO:0007669"/>
    <property type="project" value="Ensembl"/>
</dbReference>
<dbReference type="GO" id="GO:0043325">
    <property type="term" value="F:phosphatidylinositol-3,4-bisphosphate binding"/>
    <property type="evidence" value="ECO:0007669"/>
    <property type="project" value="Ensembl"/>
</dbReference>
<dbReference type="GO" id="GO:0030336">
    <property type="term" value="P:negative regulation of cell migration"/>
    <property type="evidence" value="ECO:0000314"/>
    <property type="project" value="MGI"/>
</dbReference>
<dbReference type="GO" id="GO:0035021">
    <property type="term" value="P:negative regulation of Rac protein signal transduction"/>
    <property type="evidence" value="ECO:0000314"/>
    <property type="project" value="MGI"/>
</dbReference>
<dbReference type="GO" id="GO:0035024">
    <property type="term" value="P:negative regulation of Rho protein signal transduction"/>
    <property type="evidence" value="ECO:0000314"/>
    <property type="project" value="MGI"/>
</dbReference>
<dbReference type="GO" id="GO:0008360">
    <property type="term" value="P:regulation of cell shape"/>
    <property type="evidence" value="ECO:0000314"/>
    <property type="project" value="MGI"/>
</dbReference>
<dbReference type="GO" id="GO:0007165">
    <property type="term" value="P:signal transduction"/>
    <property type="evidence" value="ECO:0007669"/>
    <property type="project" value="InterPro"/>
</dbReference>
<dbReference type="CDD" id="cd17902">
    <property type="entry name" value="ArfGap_ARAP3"/>
    <property type="match status" value="1"/>
</dbReference>
<dbReference type="CDD" id="cd13253">
    <property type="entry name" value="PH1_ARAP"/>
    <property type="match status" value="1"/>
</dbReference>
<dbReference type="CDD" id="cd13254">
    <property type="entry name" value="PH2_ARAP"/>
    <property type="match status" value="1"/>
</dbReference>
<dbReference type="CDD" id="cd13259">
    <property type="entry name" value="PH5_ARAP"/>
    <property type="match status" value="1"/>
</dbReference>
<dbReference type="CDD" id="cd04385">
    <property type="entry name" value="RhoGAP_ARAP"/>
    <property type="match status" value="1"/>
</dbReference>
<dbReference type="CDD" id="cd09490">
    <property type="entry name" value="SAM_Arap1_2_3"/>
    <property type="match status" value="1"/>
</dbReference>
<dbReference type="FunFam" id="2.30.29.30:FF:000128">
    <property type="entry name" value="arf-GAP with Rho-GAP domain, ANK repeat and PH domain-containing protein 2"/>
    <property type="match status" value="1"/>
</dbReference>
<dbReference type="FunFam" id="1.10.150.50:FF:000057">
    <property type="entry name" value="Arf-GAP with Rho-GAP domain, ANK repeat and PH domain-containing protein 3"/>
    <property type="match status" value="1"/>
</dbReference>
<dbReference type="FunFam" id="1.10.555.10:FF:000019">
    <property type="entry name" value="Arf-GAP with Rho-GAP domain, ANK repeat and PH domain-containing protein 3"/>
    <property type="match status" value="1"/>
</dbReference>
<dbReference type="FunFam" id="3.10.20.90:FF:000109">
    <property type="entry name" value="Arf-GAP with Rho-GAP domain, ANK repeat and PH domain-containing protein 3"/>
    <property type="match status" value="1"/>
</dbReference>
<dbReference type="FunFam" id="1.10.220.150:FF:000006">
    <property type="entry name" value="arf-GAP with Rho-GAP domain, ANK repeat and PH domain-containing protein 3"/>
    <property type="match status" value="1"/>
</dbReference>
<dbReference type="FunFam" id="2.30.29.30:FF:000193">
    <property type="entry name" value="arf-GAP with Rho-GAP domain, ANK repeat and PH domain-containing protein 3"/>
    <property type="match status" value="1"/>
</dbReference>
<dbReference type="FunFam" id="2.30.29.30:FF:000201">
    <property type="entry name" value="arf-GAP with Rho-GAP domain, ANK repeat and PH domain-containing protein 3"/>
    <property type="match status" value="1"/>
</dbReference>
<dbReference type="Gene3D" id="1.10.220.150">
    <property type="entry name" value="Arf GTPase activating protein"/>
    <property type="match status" value="1"/>
</dbReference>
<dbReference type="Gene3D" id="3.10.20.90">
    <property type="entry name" value="Phosphatidylinositol 3-kinase Catalytic Subunit, Chain A, domain 1"/>
    <property type="match status" value="1"/>
</dbReference>
<dbReference type="Gene3D" id="2.30.29.30">
    <property type="entry name" value="Pleckstrin-homology domain (PH domain)/Phosphotyrosine-binding domain (PTB)"/>
    <property type="match status" value="3"/>
</dbReference>
<dbReference type="Gene3D" id="1.10.555.10">
    <property type="entry name" value="Rho GTPase activation protein"/>
    <property type="match status" value="1"/>
</dbReference>
<dbReference type="Gene3D" id="1.10.150.50">
    <property type="entry name" value="Transcription Factor, Ets-1"/>
    <property type="match status" value="1"/>
</dbReference>
<dbReference type="InterPro" id="IPR052227">
    <property type="entry name" value="Arf-Rho-GAP_ANK-PH_domain"/>
</dbReference>
<dbReference type="InterPro" id="IPR037278">
    <property type="entry name" value="ARFGAP/RecO"/>
</dbReference>
<dbReference type="InterPro" id="IPR001164">
    <property type="entry name" value="ArfGAP_dom"/>
</dbReference>
<dbReference type="InterPro" id="IPR038508">
    <property type="entry name" value="ArfGAP_dom_sf"/>
</dbReference>
<dbReference type="InterPro" id="IPR011993">
    <property type="entry name" value="PH-like_dom_sf"/>
</dbReference>
<dbReference type="InterPro" id="IPR001849">
    <property type="entry name" value="PH_domain"/>
</dbReference>
<dbReference type="InterPro" id="IPR000159">
    <property type="entry name" value="RA_dom"/>
</dbReference>
<dbReference type="InterPro" id="IPR008936">
    <property type="entry name" value="Rho_GTPase_activation_prot"/>
</dbReference>
<dbReference type="InterPro" id="IPR037858">
    <property type="entry name" value="RhoGAP_ARAP"/>
</dbReference>
<dbReference type="InterPro" id="IPR000198">
    <property type="entry name" value="RhoGAP_dom"/>
</dbReference>
<dbReference type="InterPro" id="IPR001660">
    <property type="entry name" value="SAM"/>
</dbReference>
<dbReference type="InterPro" id="IPR013761">
    <property type="entry name" value="SAM/pointed_sf"/>
</dbReference>
<dbReference type="InterPro" id="IPR029071">
    <property type="entry name" value="Ubiquitin-like_domsf"/>
</dbReference>
<dbReference type="PANTHER" id="PTHR45899:SF4">
    <property type="entry name" value="ARF-GAP WITH RHO-GAP DOMAIN, ANK REPEAT AND PH DOMAIN-CONTAINING PROTEIN 3"/>
    <property type="match status" value="1"/>
</dbReference>
<dbReference type="PANTHER" id="PTHR45899">
    <property type="entry name" value="RHO GTPASE ACTIVATING PROTEIN AT 15B, ISOFORM C"/>
    <property type="match status" value="1"/>
</dbReference>
<dbReference type="Pfam" id="PF01412">
    <property type="entry name" value="ArfGap"/>
    <property type="match status" value="1"/>
</dbReference>
<dbReference type="Pfam" id="PF00169">
    <property type="entry name" value="PH"/>
    <property type="match status" value="2"/>
</dbReference>
<dbReference type="Pfam" id="PF00788">
    <property type="entry name" value="RA"/>
    <property type="match status" value="1"/>
</dbReference>
<dbReference type="Pfam" id="PF00620">
    <property type="entry name" value="RhoGAP"/>
    <property type="match status" value="1"/>
</dbReference>
<dbReference type="Pfam" id="PF07647">
    <property type="entry name" value="SAM_2"/>
    <property type="match status" value="1"/>
</dbReference>
<dbReference type="PRINTS" id="PR00405">
    <property type="entry name" value="REVINTRACTNG"/>
</dbReference>
<dbReference type="SMART" id="SM00105">
    <property type="entry name" value="ArfGap"/>
    <property type="match status" value="1"/>
</dbReference>
<dbReference type="SMART" id="SM00233">
    <property type="entry name" value="PH"/>
    <property type="match status" value="5"/>
</dbReference>
<dbReference type="SMART" id="SM00324">
    <property type="entry name" value="RhoGAP"/>
    <property type="match status" value="1"/>
</dbReference>
<dbReference type="SMART" id="SM00454">
    <property type="entry name" value="SAM"/>
    <property type="match status" value="1"/>
</dbReference>
<dbReference type="SUPFAM" id="SSF57863">
    <property type="entry name" value="ArfGap/RecO-like zinc finger"/>
    <property type="match status" value="1"/>
</dbReference>
<dbReference type="SUPFAM" id="SSF48350">
    <property type="entry name" value="GTPase activation domain, GAP"/>
    <property type="match status" value="1"/>
</dbReference>
<dbReference type="SUPFAM" id="SSF50729">
    <property type="entry name" value="PH domain-like"/>
    <property type="match status" value="5"/>
</dbReference>
<dbReference type="SUPFAM" id="SSF47769">
    <property type="entry name" value="SAM/Pointed domain"/>
    <property type="match status" value="1"/>
</dbReference>
<dbReference type="SUPFAM" id="SSF54236">
    <property type="entry name" value="Ubiquitin-like"/>
    <property type="match status" value="1"/>
</dbReference>
<dbReference type="PROSITE" id="PS50115">
    <property type="entry name" value="ARFGAP"/>
    <property type="match status" value="1"/>
</dbReference>
<dbReference type="PROSITE" id="PS50003">
    <property type="entry name" value="PH_DOMAIN"/>
    <property type="match status" value="3"/>
</dbReference>
<dbReference type="PROSITE" id="PS50200">
    <property type="entry name" value="RA"/>
    <property type="match status" value="1"/>
</dbReference>
<dbReference type="PROSITE" id="PS50238">
    <property type="entry name" value="RHOGAP"/>
    <property type="match status" value="1"/>
</dbReference>
<dbReference type="PROSITE" id="PS50105">
    <property type="entry name" value="SAM_DOMAIN"/>
    <property type="match status" value="1"/>
</dbReference>
<proteinExistence type="evidence at protein level"/>
<comment type="function">
    <text evidence="9">Phosphatidylinositol 3,4,5-trisphosphate-dependent GTPase-activating protein that modulates actin cytoskeleton remodeling by regulating ARF and RHO family members. Is activated by phosphatidylinositol 3,4,5-trisphosphate (PtdIns(3,4,5)P3) binding. Can be activated by phosphatidylinositol 3,4-bisphosphate (PtdIns(3,4,5)P2) binding, albeit with lower efficiency. Acts preferentially on ARF5 and on RHOA.</text>
</comment>
<comment type="subunit">
    <text evidence="1">Interacts (via SAM domain) with INPPL1/SHIP2.</text>
</comment>
<comment type="interaction">
    <interactant intactId="EBI-621463">
        <id>Q8R5G7</id>
    </interactant>
    <interactant intactId="EBI-79452">
        <id>P07948</id>
        <label>LYN</label>
    </interactant>
    <organismsDiffer>true</organismsDiffer>
    <experiments>2</experiments>
</comment>
<comment type="interaction">
    <interactant intactId="EBI-621463">
        <id>Q8R5G7</id>
    </interactant>
    <interactant intactId="EBI-621482">
        <id>P12931</id>
        <label>SRC</label>
    </interactant>
    <organismsDiffer>true</organismsDiffer>
    <experiments>3</experiments>
</comment>
<comment type="subcellular location">
    <subcellularLocation>
        <location evidence="9">Cytoplasm</location>
    </subcellularLocation>
    <subcellularLocation>
        <location evidence="9">Cell membrane</location>
        <topology evidence="9">Peripheral membrane protein</topology>
    </subcellularLocation>
    <subcellularLocation>
        <location evidence="9">Cytoplasm</location>
        <location evidence="9">Cytoskeleton</location>
    </subcellularLocation>
    <subcellularLocation>
        <location evidence="9">Cell projection</location>
        <location evidence="9">Lamellipodium</location>
    </subcellularLocation>
    <subcellularLocation>
        <location evidence="9">Cell projection</location>
        <location evidence="9">Ruffle</location>
    </subcellularLocation>
    <text>Cytoplasmic, and associated with F-actin-rich membrane ruffles and lamellipodia.</text>
</comment>
<comment type="alternative products">
    <event type="alternative splicing"/>
    <isoform>
        <id>Q8R5G7-1</id>
        <name>1</name>
        <sequence type="displayed"/>
    </isoform>
    <isoform>
        <id>Q8R5G7-2</id>
        <name>2</name>
        <name>ARAP3 delta-SAM</name>
        <sequence type="described" ref="VSP_015003"/>
    </isoform>
    <isoform>
        <id>Q8R5G7-3</id>
        <name>3</name>
        <sequence type="described" ref="VSP_015002 VSP_015004"/>
    </isoform>
</comment>
<comment type="PTM">
    <text evidence="9">Tyrosine phosphorylated at a low basal level. PDGF treatment stimulates phosphorylation. Tyrosine phosphorylation is increased in cells that are in the process of becoming attached to a substrate and that start spreading and flattening.</text>
</comment>
<comment type="sequence caution" evidence="12">
    <conflict type="erroneous initiation">
        <sequence resource="EMBL-CDS" id="AAL78678"/>
    </conflict>
</comment>
<comment type="sequence caution" evidence="12">
    <conflict type="erroneous initiation">
        <sequence resource="EMBL-CDS" id="BAD90507"/>
    </conflict>
</comment>
<gene>
    <name type="primary">Arap3</name>
    <name type="synonym">Centd3</name>
    <name type="synonym">Drag1</name>
    <name type="synonym">Kiaa4097</name>
</gene>
<sequence>MAAPQDLDIAVWLALVHLEQYADTFRRHGLATAGAAQHLGHEELRHLGISATGHRKRILRLLRAGSAEGFLDSHLDNTMEPTPSPAPDAQPPKPVPKPRTVFGLSNPATAQRPGLSPIFWDPEVSRNSECTQRSSPLLPSSSEQPSVPNTMEMMPNAIYFGLDLRGRAQAAQDVTPDSSQATVPTPAFRPTTGTVHIMDPGCLYYGVQPVGIPGASDRRDGRGVCQERAEHRQDLETREDAGYASLELPGDSILSLPTQDAETSDDLISPYASFSSTADRPVPLLSGWLDKLSPQGNYVFQRRFVQFNGRSLMYFGSDKDPFPKGVIPLTAIEMTRSSKDNKFQVITGQRVFVFRTESEAQRDLWCSTLQSCLKEQRLLGHPRPPHPPRPLRTGTLELRGHKAKVFAALIPGELALYKSEQAFSLGIGICFIELQGCSVRETKSRSFDLLTPHRCFSFTAESGGARQSWAAALQEAVTETLSDYEVAEKVWSNPANRHCADCRASRPDWAAVNLGVVICKQCAGQHRALGSGISKVQSLKLDTSVWSNEIVQLFIVLGNDRANCFWAGALPPGEGLHPDSAPGPRGEFISRKYKLGLFRKPHPRHPDHSQLLQALCAAMAGPNLLKNMAQLLCVETSEGEEPLSPSALNGSLLSLLPSDSPGVYNEVVVPATYRGFLYCGSISNKAGAPPLRRGRDAPPRLWCVLGAALEMFASESSPEPLSLLQPQDIVCLGVSPPPADPGDLDRFPFSFELILTGGRIQHFATDGADSLEAWISAVGKWFSPLSCHQLLGPGLLRMGRLWLRSPSHAGLAPGLWLSGFGLLRGDHLFLCPAPGPGPPAPEDMVHLRRLQEISVVSAADTPDKKEHLVLVETGRTLYLQGEGRLDFAAWNTAIGGAAGGGGTGLQEQQMSRGDIPIIVDACISFVTQHGLRLEGVYRKGGARARSLRLLAEFRRDARSVKLRPREHFVEDVTDTLKRFFRELDDPVTSARLLPRWREAAELSQKNQRLEKYKEVISCLPRVNRRTLATLIGHLYRVQKCASLNQMCTRNLALLFAPSVFQTDGRGEHEVRVLQELIDGYISVFDIDSDQAAQIDLEVSLITTWKDVQLSQAGDLIMEVYIEQQLPDNCVTLKVSPTLTAEELTNQVLEMRGAASGTDLWVTFEILEHGELERPLHPKEKVLEQALQWCQLPEPCSASLLLRKVSMAHAGCLFTGVRRESPRVGLLRCREEPPRLLGNRFQERFFLVRGRCLLLLKEKKSSKPEREWSLEGAKVYLGIRKKLKPPTLWGFTLILEKMHLCLSCMDEEEMWDWTTSILKAQHDDQQSVVLRRRSSSDLARQKFGTMPLLPIRGDDSGATLLSANQTLRRLHNRRTLSMFFPMKSPQGSVEEQDELEEPVYEEPVYEEVGAFPELTKDTTFSSTWEWSAKSDPSLTSQRSFDQPPLSKASMLGHEERIPDPPPGPPSKSSSQARGSLEEQLLQELNNLILRKGEPASCPESSSQPTSPQAPSPTSLPTPTPSLPTQPPCTSNPPSSQPLT</sequence>
<reference key="1">
    <citation type="journal article" date="2004" name="J. Cell Sci.">
        <title>ARAP3 is transiently tyrosine phosphorylated in cells attaching to fibronectin and inhibits cell spreading in a RhoGAP-dependent manner.</title>
        <authorList>
            <person name="Stacey T.T.I."/>
            <person name="Nie Z."/>
            <person name="Stewart A."/>
            <person name="Najdovska M."/>
            <person name="Hall N.E."/>
            <person name="He H."/>
            <person name="Randazzo P.A."/>
            <person name="Lock P."/>
        </authorList>
    </citation>
    <scope>NUCLEOTIDE SEQUENCE [MRNA] (ISOFORMS 1 AND 2)</scope>
    <scope>FUNCTION</scope>
    <scope>MUTAGENESIS OF ARG-938; TYR-1399 AND TYR-1404</scope>
    <scope>PHOSPHORYLATION AT TYR-1399 AND TYR-1404</scope>
    <scope>SUBCELLULAR LOCATION</scope>
    <source>
        <strain>NIH Swiss</strain>
        <tissue>Embryo</tissue>
    </source>
</reference>
<reference key="2">
    <citation type="journal article" date="2009" name="PLoS Biol.">
        <title>Lineage-specific biology revealed by a finished genome assembly of the mouse.</title>
        <authorList>
            <person name="Church D.M."/>
            <person name="Goodstadt L."/>
            <person name="Hillier L.W."/>
            <person name="Zody M.C."/>
            <person name="Goldstein S."/>
            <person name="She X."/>
            <person name="Bult C.J."/>
            <person name="Agarwala R."/>
            <person name="Cherry J.L."/>
            <person name="DiCuccio M."/>
            <person name="Hlavina W."/>
            <person name="Kapustin Y."/>
            <person name="Meric P."/>
            <person name="Maglott D."/>
            <person name="Birtle Z."/>
            <person name="Marques A.C."/>
            <person name="Graves T."/>
            <person name="Zhou S."/>
            <person name="Teague B."/>
            <person name="Potamousis K."/>
            <person name="Churas C."/>
            <person name="Place M."/>
            <person name="Herschleb J."/>
            <person name="Runnheim R."/>
            <person name="Forrest D."/>
            <person name="Amos-Landgraf J."/>
            <person name="Schwartz D.C."/>
            <person name="Cheng Z."/>
            <person name="Lindblad-Toh K."/>
            <person name="Eichler E.E."/>
            <person name="Ponting C.P."/>
        </authorList>
    </citation>
    <scope>NUCLEOTIDE SEQUENCE [LARGE SCALE GENOMIC DNA]</scope>
    <source>
        <strain>C57BL/6J</strain>
    </source>
</reference>
<reference key="3">
    <citation type="journal article" date="2004" name="Genome Res.">
        <title>The status, quality, and expansion of the NIH full-length cDNA project: the Mammalian Gene Collection (MGC).</title>
        <authorList>
            <consortium name="The MGC Project Team"/>
        </authorList>
    </citation>
    <scope>NUCLEOTIDE SEQUENCE [LARGE SCALE MRNA] (ISOFORM 1)</scope>
    <source>
        <strain>C57BL/6J</strain>
        <tissue>Brain</tissue>
    </source>
</reference>
<reference key="4">
    <citation type="submission" date="2005-02" db="EMBL/GenBank/DDBJ databases">
        <title>Prediction of the coding sequences of mouse homologues of KIAA gene. The complete nucleotide sequences of mouse KIAA-homologous cDNAs identified by screening of terminal sequences of cDNA clones randomly sampled from size-fractionated libraries.</title>
        <authorList>
            <person name="Okazaki N."/>
            <person name="Kikuno R.F."/>
            <person name="Ohara R."/>
            <person name="Inamoto S."/>
            <person name="Nagase T."/>
            <person name="Ohara O."/>
            <person name="Koga H."/>
        </authorList>
    </citation>
    <scope>NUCLEOTIDE SEQUENCE [LARGE SCALE MRNA] OF 619-1538 (ISOFORM 3)</scope>
    <source>
        <tissue>Brain</tissue>
    </source>
</reference>
<reference key="5">
    <citation type="journal article" date="2007" name="J. Immunol.">
        <title>Quantitative time-resolved phosphoproteomic analysis of mast cell signaling.</title>
        <authorList>
            <person name="Cao L."/>
            <person name="Yu K."/>
            <person name="Banh C."/>
            <person name="Nguyen V."/>
            <person name="Ritz A."/>
            <person name="Raphael B.J."/>
            <person name="Kawakami Y."/>
            <person name="Kawakami T."/>
            <person name="Salomon A.R."/>
        </authorList>
    </citation>
    <scope>PHOSPHORYLATION [LARGE SCALE ANALYSIS] AT TYR-1404</scope>
    <scope>IDENTIFICATION BY MASS SPECTROMETRY [LARGE SCALE ANALYSIS]</scope>
    <source>
        <tissue>Mast cell</tissue>
    </source>
</reference>
<reference key="6">
    <citation type="journal article" date="2010" name="Cell">
        <title>A tissue-specific atlas of mouse protein phosphorylation and expression.</title>
        <authorList>
            <person name="Huttlin E.L."/>
            <person name="Jedrychowski M.P."/>
            <person name="Elias J.E."/>
            <person name="Goswami T."/>
            <person name="Rad R."/>
            <person name="Beausoleil S.A."/>
            <person name="Villen J."/>
            <person name="Haas W."/>
            <person name="Sowa M.E."/>
            <person name="Gygi S.P."/>
        </authorList>
    </citation>
    <scope>PHOSPHORYLATION [LARGE SCALE ANALYSIS] AT THR-1344</scope>
    <scope>IDENTIFICATION BY MASS SPECTROMETRY [LARGE SCALE ANALYSIS]</scope>
    <source>
        <tissue>Brown adipose tissue</tissue>
        <tissue>Heart</tissue>
        <tissue>Kidney</tissue>
        <tissue>Lung</tissue>
        <tissue>Spleen</tissue>
    </source>
</reference>
<keyword id="KW-0025">Alternative splicing</keyword>
<keyword id="KW-1003">Cell membrane</keyword>
<keyword id="KW-0966">Cell projection</keyword>
<keyword id="KW-0963">Cytoplasm</keyword>
<keyword id="KW-0206">Cytoskeleton</keyword>
<keyword id="KW-0343">GTPase activation</keyword>
<keyword id="KW-0472">Membrane</keyword>
<keyword id="KW-0597">Phosphoprotein</keyword>
<keyword id="KW-1185">Reference proteome</keyword>
<keyword id="KW-0677">Repeat</keyword>
<evidence type="ECO:0000250" key="1"/>
<evidence type="ECO:0000250" key="2">
    <source>
        <dbReference type="UniProtKB" id="Q8WWN8"/>
    </source>
</evidence>
<evidence type="ECO:0000255" key="3">
    <source>
        <dbReference type="PROSITE-ProRule" id="PRU00145"/>
    </source>
</evidence>
<evidence type="ECO:0000255" key="4">
    <source>
        <dbReference type="PROSITE-ProRule" id="PRU00166"/>
    </source>
</evidence>
<evidence type="ECO:0000255" key="5">
    <source>
        <dbReference type="PROSITE-ProRule" id="PRU00172"/>
    </source>
</evidence>
<evidence type="ECO:0000255" key="6">
    <source>
        <dbReference type="PROSITE-ProRule" id="PRU00184"/>
    </source>
</evidence>
<evidence type="ECO:0000255" key="7">
    <source>
        <dbReference type="PROSITE-ProRule" id="PRU00288"/>
    </source>
</evidence>
<evidence type="ECO:0000256" key="8">
    <source>
        <dbReference type="SAM" id="MobiDB-lite"/>
    </source>
</evidence>
<evidence type="ECO:0000269" key="9">
    <source>
    </source>
</evidence>
<evidence type="ECO:0000303" key="10">
    <source>
    </source>
</evidence>
<evidence type="ECO:0000303" key="11">
    <source ref="4"/>
</evidence>
<evidence type="ECO:0000305" key="12"/>
<evidence type="ECO:0007744" key="13">
    <source>
    </source>
</evidence>
<evidence type="ECO:0007744" key="14">
    <source>
    </source>
</evidence>
<name>ARAP3_MOUSE</name>
<feature type="chain" id="PRO_0000074216" description="Arf-GAP with Rho-GAP domain, ANK repeat and PH domain-containing protein 3">
    <location>
        <begin position="1"/>
        <end position="1538"/>
    </location>
</feature>
<feature type="domain" description="SAM" evidence="6">
    <location>
        <begin position="4"/>
        <end position="68"/>
    </location>
</feature>
<feature type="domain" description="PH 1" evidence="3">
    <location>
        <begin position="282"/>
        <end position="374"/>
    </location>
</feature>
<feature type="domain" description="PH 2" evidence="3">
    <location>
        <begin position="389"/>
        <end position="478"/>
    </location>
</feature>
<feature type="domain" description="Arf-GAP" evidence="7">
    <location>
        <begin position="479"/>
        <end position="606"/>
    </location>
</feature>
<feature type="domain" description="PH 3" evidence="3">
    <location>
        <begin position="671"/>
        <end position="785"/>
    </location>
</feature>
<feature type="domain" description="PH 4" evidence="3">
    <location>
        <begin position="795"/>
        <end position="901"/>
    </location>
</feature>
<feature type="domain" description="Rho-GAP" evidence="5">
    <location>
        <begin position="903"/>
        <end position="1084"/>
    </location>
</feature>
<feature type="domain" description="Ras-associating" evidence="4">
    <location>
        <begin position="1113"/>
        <end position="1206"/>
    </location>
</feature>
<feature type="domain" description="PH 5" evidence="3">
    <location>
        <begin position="1219"/>
        <end position="1321"/>
    </location>
</feature>
<feature type="region of interest" description="Disordered" evidence="8">
    <location>
        <begin position="72"/>
        <end position="97"/>
    </location>
</feature>
<feature type="region of interest" description="Disordered" evidence="8">
    <location>
        <begin position="125"/>
        <end position="149"/>
    </location>
</feature>
<feature type="region of interest" description="Disordered" evidence="8">
    <location>
        <begin position="215"/>
        <end position="242"/>
    </location>
</feature>
<feature type="region of interest" description="Disordered" evidence="8">
    <location>
        <begin position="1425"/>
        <end position="1538"/>
    </location>
</feature>
<feature type="compositionally biased region" description="Pro residues" evidence="8">
    <location>
        <begin position="82"/>
        <end position="97"/>
    </location>
</feature>
<feature type="compositionally biased region" description="Basic and acidic residues" evidence="8">
    <location>
        <begin position="216"/>
        <end position="241"/>
    </location>
</feature>
<feature type="compositionally biased region" description="Polar residues" evidence="8">
    <location>
        <begin position="1425"/>
        <end position="1439"/>
    </location>
</feature>
<feature type="compositionally biased region" description="Low complexity" evidence="8">
    <location>
        <begin position="1476"/>
        <end position="1486"/>
    </location>
</feature>
<feature type="compositionally biased region" description="Low complexity" evidence="8">
    <location>
        <begin position="1494"/>
        <end position="1505"/>
    </location>
</feature>
<feature type="compositionally biased region" description="Pro residues" evidence="8">
    <location>
        <begin position="1506"/>
        <end position="1529"/>
    </location>
</feature>
<feature type="site" description="Arginine finger; crucial for GTP hydrolysis by stabilizing the transition state" evidence="5">
    <location>
        <position position="938"/>
    </location>
</feature>
<feature type="modified residue" description="Phosphothreonine" evidence="14">
    <location>
        <position position="1344"/>
    </location>
</feature>
<feature type="modified residue" description="Phosphotyrosine" evidence="9">
    <location>
        <position position="1399"/>
    </location>
</feature>
<feature type="modified residue" description="Phosphotyrosine" evidence="9 13">
    <location>
        <position position="1404"/>
    </location>
</feature>
<feature type="modified residue" description="Phosphoserine" evidence="2">
    <location>
        <position position="1438"/>
    </location>
</feature>
<feature type="modified residue" description="Phosphoserine" evidence="2">
    <location>
        <position position="1474"/>
    </location>
</feature>
<feature type="splice variant" id="VSP_015002" description="In isoform 3." evidence="11">
    <location>
        <begin position="1"/>
        <end position="618"/>
    </location>
</feature>
<feature type="splice variant" id="VSP_015003" description="In isoform 2." evidence="10">
    <location>
        <begin position="1"/>
        <end position="78"/>
    </location>
</feature>
<feature type="splice variant" id="VSP_015004" description="In isoform 3." evidence="11">
    <original>KASMLGHEERIPDPPPGPPSKSSSQARGSLEEQLLQELNNLILRKGEPASCPESSSQPTSPQAPSPTSLPTPTPSLPTQPPCTSNPPSSQPLT</original>
    <variation>GPSPFVCTMKSLKEGEG</variation>
    <location>
        <begin position="1446"/>
        <end position="1538"/>
    </location>
</feature>
<feature type="mutagenesis site" description="Loss of Rho GAP activity. Enhances cell spreading." evidence="9">
    <original>R</original>
    <variation>L</variation>
    <location>
        <position position="938"/>
    </location>
</feature>
<feature type="mutagenesis site" description="Strongly reduces phosphorylation by CSK; when associated with F-1404." evidence="9">
    <original>Y</original>
    <variation>F</variation>
    <location>
        <position position="1399"/>
    </location>
</feature>
<feature type="mutagenesis site" description="Strongly reduces phosphorylation by CSK; when associated with F-1399." evidence="9">
    <original>Y</original>
    <variation>F</variation>
    <location>
        <position position="1404"/>
    </location>
</feature>
<feature type="sequence conflict" description="In Ref. 3; AAH68145." evidence="12" ref="3">
    <original>Q</original>
    <variation>H</variation>
    <location>
        <position position="144"/>
    </location>
</feature>
<feature type="sequence conflict" description="In Ref. 1; AAL78677/AAL78678." evidence="12" ref="1">
    <original>R</original>
    <variation>Q</variation>
    <location>
        <position position="167"/>
    </location>
</feature>
<feature type="sequence conflict" description="In Ref. 1; AAL78677/AAL78678." evidence="12" ref="1">
    <original>M</original>
    <variation>T</variation>
    <location>
        <position position="1304"/>
    </location>
</feature>
<feature type="sequence conflict" description="In Ref. 1; AAL78677/AAL78678." evidence="12" ref="1">
    <original>S</original>
    <variation>P</variation>
    <location>
        <position position="1500"/>
    </location>
</feature>
<accession>Q8R5G7</accession>
<accession>E9QMK7</accession>
<accession>Q5DTN4</accession>
<accession>Q6NVF1</accession>
<accession>Q8R5G6</accession>
<protein>
    <recommendedName>
        <fullName>Arf-GAP with Rho-GAP domain, ANK repeat and PH domain-containing protein 3</fullName>
    </recommendedName>
    <alternativeName>
        <fullName>Centaurin-delta-3</fullName>
        <shortName>Cnt-d3</shortName>
    </alternativeName>
    <alternativeName>
        <fullName>Dual specificity Rho- and Arf-GTPase-activating protein 1</fullName>
    </alternativeName>
</protein>
<organism>
    <name type="scientific">Mus musculus</name>
    <name type="common">Mouse</name>
    <dbReference type="NCBI Taxonomy" id="10090"/>
    <lineage>
        <taxon>Eukaryota</taxon>
        <taxon>Metazoa</taxon>
        <taxon>Chordata</taxon>
        <taxon>Craniata</taxon>
        <taxon>Vertebrata</taxon>
        <taxon>Euteleostomi</taxon>
        <taxon>Mammalia</taxon>
        <taxon>Eutheria</taxon>
        <taxon>Euarchontoglires</taxon>
        <taxon>Glires</taxon>
        <taxon>Rodentia</taxon>
        <taxon>Myomorpha</taxon>
        <taxon>Muroidea</taxon>
        <taxon>Muridae</taxon>
        <taxon>Murinae</taxon>
        <taxon>Mus</taxon>
        <taxon>Mus</taxon>
    </lineage>
</organism>